<organism>
    <name type="scientific">Burkholderia lata (strain ATCC 17760 / DSM 23089 / LMG 22485 / NCIMB 9086 / R18194 / 383)</name>
    <dbReference type="NCBI Taxonomy" id="482957"/>
    <lineage>
        <taxon>Bacteria</taxon>
        <taxon>Pseudomonadati</taxon>
        <taxon>Pseudomonadota</taxon>
        <taxon>Betaproteobacteria</taxon>
        <taxon>Burkholderiales</taxon>
        <taxon>Burkholderiaceae</taxon>
        <taxon>Burkholderia</taxon>
        <taxon>Burkholderia cepacia complex</taxon>
    </lineage>
</organism>
<keyword id="KW-1003">Cell membrane</keyword>
<keyword id="KW-0285">Flavoprotein</keyword>
<keyword id="KW-0288">FMN</keyword>
<keyword id="KW-0472">Membrane</keyword>
<keyword id="KW-0560">Oxidoreductase</keyword>
<keyword id="KW-0665">Pyrimidine biosynthesis</keyword>
<sequence length="345" mass="36750">MFSSLYPLARASLFKMDAEDAHHLTLRALGAAGRTGLACALSARVPDAPRTVMGLTFRNPVGLAAGLDKDGAAIDGLAALGFGFIEVGTVTPRAQPGNPRPRMFRLPQAEALINRMGFNNHGVDQFVKNVQAARYRGILGLNIGKNADTPIERAAEDYLYCLERVYPFASYVTINISSPNTKNLRQLQGAGELDALLAALKDKQQRLADLHGKLVPLALKIAPDLDDEQVKEIGDTLLRHKIEAVIATNTTLSRAAVQGLPHADEAGGLSGRPVFDASNEVIRKLHAEVGSEVPIIGVGGIFSGEDARAKLAAGAALVQLYTGFIYRGPALVSECVKAIARERTA</sequence>
<gene>
    <name evidence="1" type="primary">pyrD</name>
    <name type="ordered locus">Bcep18194_A4696</name>
</gene>
<protein>
    <recommendedName>
        <fullName evidence="1">Dihydroorotate dehydrogenase (quinone)</fullName>
        <ecNumber evidence="1">1.3.5.2</ecNumber>
    </recommendedName>
    <alternativeName>
        <fullName evidence="1">DHOdehase</fullName>
        <shortName evidence="1">DHOD</shortName>
        <shortName evidence="1">DHODase</shortName>
    </alternativeName>
    <alternativeName>
        <fullName evidence="1">Dihydroorotate oxidase</fullName>
    </alternativeName>
</protein>
<reference key="1">
    <citation type="submission" date="2005-10" db="EMBL/GenBank/DDBJ databases">
        <title>Complete sequence of chromosome 1 of Burkholderia sp. 383.</title>
        <authorList>
            <consortium name="US DOE Joint Genome Institute"/>
            <person name="Copeland A."/>
            <person name="Lucas S."/>
            <person name="Lapidus A."/>
            <person name="Barry K."/>
            <person name="Detter J.C."/>
            <person name="Glavina T."/>
            <person name="Hammon N."/>
            <person name="Israni S."/>
            <person name="Pitluck S."/>
            <person name="Chain P."/>
            <person name="Malfatti S."/>
            <person name="Shin M."/>
            <person name="Vergez L."/>
            <person name="Schmutz J."/>
            <person name="Larimer F."/>
            <person name="Land M."/>
            <person name="Kyrpides N."/>
            <person name="Lykidis A."/>
            <person name="Richardson P."/>
        </authorList>
    </citation>
    <scope>NUCLEOTIDE SEQUENCE [LARGE SCALE GENOMIC DNA]</scope>
    <source>
        <strain>ATCC 17760 / DSM 23089 / LMG 22485 / NCIMB 9086 / R18194 / 383</strain>
    </source>
</reference>
<comment type="function">
    <text evidence="1">Catalyzes the conversion of dihydroorotate to orotate with quinone as electron acceptor.</text>
</comment>
<comment type="catalytic activity">
    <reaction evidence="1">
        <text>(S)-dihydroorotate + a quinone = orotate + a quinol</text>
        <dbReference type="Rhea" id="RHEA:30187"/>
        <dbReference type="ChEBI" id="CHEBI:24646"/>
        <dbReference type="ChEBI" id="CHEBI:30839"/>
        <dbReference type="ChEBI" id="CHEBI:30864"/>
        <dbReference type="ChEBI" id="CHEBI:132124"/>
        <dbReference type="EC" id="1.3.5.2"/>
    </reaction>
</comment>
<comment type="cofactor">
    <cofactor evidence="1">
        <name>FMN</name>
        <dbReference type="ChEBI" id="CHEBI:58210"/>
    </cofactor>
    <text evidence="1">Binds 1 FMN per subunit.</text>
</comment>
<comment type="pathway">
    <text evidence="1">Pyrimidine metabolism; UMP biosynthesis via de novo pathway; orotate from (S)-dihydroorotate (quinone route): step 1/1.</text>
</comment>
<comment type="subunit">
    <text evidence="1">Monomer.</text>
</comment>
<comment type="subcellular location">
    <subcellularLocation>
        <location evidence="1">Cell membrane</location>
        <topology evidence="1">Peripheral membrane protein</topology>
    </subcellularLocation>
</comment>
<comment type="similarity">
    <text evidence="1">Belongs to the dihydroorotate dehydrogenase family. Type 2 subfamily.</text>
</comment>
<comment type="sequence caution" evidence="2">
    <conflict type="erroneous initiation">
        <sequence resource="EMBL-CDS" id="ABB08291"/>
    </conflict>
</comment>
<feature type="chain" id="PRO_0000336460" description="Dihydroorotate dehydrogenase (quinone)">
    <location>
        <begin position="1"/>
        <end position="345"/>
    </location>
</feature>
<feature type="active site" description="Nucleophile" evidence="1">
    <location>
        <position position="178"/>
    </location>
</feature>
<feature type="binding site" evidence="1">
    <location>
        <begin position="65"/>
        <end position="69"/>
    </location>
    <ligand>
        <name>FMN</name>
        <dbReference type="ChEBI" id="CHEBI:58210"/>
    </ligand>
</feature>
<feature type="binding site" evidence="1">
    <location>
        <position position="69"/>
    </location>
    <ligand>
        <name>substrate</name>
    </ligand>
</feature>
<feature type="binding site" evidence="1">
    <location>
        <position position="89"/>
    </location>
    <ligand>
        <name>FMN</name>
        <dbReference type="ChEBI" id="CHEBI:58210"/>
    </ligand>
</feature>
<feature type="binding site" evidence="1">
    <location>
        <begin position="114"/>
        <end position="118"/>
    </location>
    <ligand>
        <name>substrate</name>
    </ligand>
</feature>
<feature type="binding site" evidence="1">
    <location>
        <position position="142"/>
    </location>
    <ligand>
        <name>FMN</name>
        <dbReference type="ChEBI" id="CHEBI:58210"/>
    </ligand>
</feature>
<feature type="binding site" evidence="1">
    <location>
        <position position="175"/>
    </location>
    <ligand>
        <name>FMN</name>
        <dbReference type="ChEBI" id="CHEBI:58210"/>
    </ligand>
</feature>
<feature type="binding site" evidence="1">
    <location>
        <position position="175"/>
    </location>
    <ligand>
        <name>substrate</name>
    </ligand>
</feature>
<feature type="binding site" evidence="1">
    <location>
        <position position="180"/>
    </location>
    <ligand>
        <name>substrate</name>
    </ligand>
</feature>
<feature type="binding site" evidence="1">
    <location>
        <position position="220"/>
    </location>
    <ligand>
        <name>FMN</name>
        <dbReference type="ChEBI" id="CHEBI:58210"/>
    </ligand>
</feature>
<feature type="binding site" evidence="1">
    <location>
        <position position="248"/>
    </location>
    <ligand>
        <name>FMN</name>
        <dbReference type="ChEBI" id="CHEBI:58210"/>
    </ligand>
</feature>
<feature type="binding site" evidence="1">
    <location>
        <begin position="249"/>
        <end position="250"/>
    </location>
    <ligand>
        <name>substrate</name>
    </ligand>
</feature>
<feature type="binding site" evidence="1">
    <location>
        <position position="271"/>
    </location>
    <ligand>
        <name>FMN</name>
        <dbReference type="ChEBI" id="CHEBI:58210"/>
    </ligand>
</feature>
<feature type="binding site" evidence="1">
    <location>
        <position position="300"/>
    </location>
    <ligand>
        <name>FMN</name>
        <dbReference type="ChEBI" id="CHEBI:58210"/>
    </ligand>
</feature>
<feature type="binding site" evidence="1">
    <location>
        <begin position="321"/>
        <end position="322"/>
    </location>
    <ligand>
        <name>FMN</name>
        <dbReference type="ChEBI" id="CHEBI:58210"/>
    </ligand>
</feature>
<proteinExistence type="inferred from homology"/>
<accession>Q39GX5</accession>
<evidence type="ECO:0000255" key="1">
    <source>
        <dbReference type="HAMAP-Rule" id="MF_00225"/>
    </source>
</evidence>
<evidence type="ECO:0000305" key="2"/>
<dbReference type="EC" id="1.3.5.2" evidence="1"/>
<dbReference type="EMBL" id="CP000151">
    <property type="protein sequence ID" value="ABB08291.1"/>
    <property type="status" value="ALT_INIT"/>
    <property type="molecule type" value="Genomic_DNA"/>
</dbReference>
<dbReference type="RefSeq" id="WP_041492819.1">
    <property type="nucleotide sequence ID" value="NC_007510.1"/>
</dbReference>
<dbReference type="SMR" id="Q39GX5"/>
<dbReference type="GeneID" id="45094595"/>
<dbReference type="KEGG" id="bur:Bcep18194_A4696"/>
<dbReference type="PATRIC" id="fig|482957.22.peg.1610"/>
<dbReference type="HOGENOM" id="CLU_013640_2_0_4"/>
<dbReference type="UniPathway" id="UPA00070">
    <property type="reaction ID" value="UER00946"/>
</dbReference>
<dbReference type="Proteomes" id="UP000002705">
    <property type="component" value="Chromosome 1"/>
</dbReference>
<dbReference type="GO" id="GO:0005737">
    <property type="term" value="C:cytoplasm"/>
    <property type="evidence" value="ECO:0007669"/>
    <property type="project" value="InterPro"/>
</dbReference>
<dbReference type="GO" id="GO:0005886">
    <property type="term" value="C:plasma membrane"/>
    <property type="evidence" value="ECO:0007669"/>
    <property type="project" value="UniProtKB-SubCell"/>
</dbReference>
<dbReference type="GO" id="GO:0106430">
    <property type="term" value="F:dihydroorotate dehydrogenase (quinone) activity"/>
    <property type="evidence" value="ECO:0007669"/>
    <property type="project" value="UniProtKB-EC"/>
</dbReference>
<dbReference type="GO" id="GO:0006207">
    <property type="term" value="P:'de novo' pyrimidine nucleobase biosynthetic process"/>
    <property type="evidence" value="ECO:0007669"/>
    <property type="project" value="InterPro"/>
</dbReference>
<dbReference type="GO" id="GO:0044205">
    <property type="term" value="P:'de novo' UMP biosynthetic process"/>
    <property type="evidence" value="ECO:0007669"/>
    <property type="project" value="UniProtKB-UniRule"/>
</dbReference>
<dbReference type="CDD" id="cd04738">
    <property type="entry name" value="DHOD_2_like"/>
    <property type="match status" value="1"/>
</dbReference>
<dbReference type="FunFam" id="3.20.20.70:FF:000028">
    <property type="entry name" value="Dihydroorotate dehydrogenase (quinone)"/>
    <property type="match status" value="1"/>
</dbReference>
<dbReference type="Gene3D" id="3.20.20.70">
    <property type="entry name" value="Aldolase class I"/>
    <property type="match status" value="1"/>
</dbReference>
<dbReference type="HAMAP" id="MF_00225">
    <property type="entry name" value="DHO_dh_type2"/>
    <property type="match status" value="1"/>
</dbReference>
<dbReference type="InterPro" id="IPR013785">
    <property type="entry name" value="Aldolase_TIM"/>
</dbReference>
<dbReference type="InterPro" id="IPR050074">
    <property type="entry name" value="DHO_dehydrogenase"/>
</dbReference>
<dbReference type="InterPro" id="IPR012135">
    <property type="entry name" value="Dihydroorotate_DH_1_2"/>
</dbReference>
<dbReference type="InterPro" id="IPR005719">
    <property type="entry name" value="Dihydroorotate_DH_2"/>
</dbReference>
<dbReference type="InterPro" id="IPR005720">
    <property type="entry name" value="Dihydroorotate_DH_cat"/>
</dbReference>
<dbReference type="InterPro" id="IPR001295">
    <property type="entry name" value="Dihydroorotate_DH_CS"/>
</dbReference>
<dbReference type="NCBIfam" id="NF003644">
    <property type="entry name" value="PRK05286.1-1"/>
    <property type="match status" value="1"/>
</dbReference>
<dbReference type="NCBIfam" id="NF003645">
    <property type="entry name" value="PRK05286.1-2"/>
    <property type="match status" value="1"/>
</dbReference>
<dbReference type="NCBIfam" id="NF003646">
    <property type="entry name" value="PRK05286.1-4"/>
    <property type="match status" value="1"/>
</dbReference>
<dbReference type="NCBIfam" id="NF003652">
    <property type="entry name" value="PRK05286.2-5"/>
    <property type="match status" value="1"/>
</dbReference>
<dbReference type="NCBIfam" id="TIGR01036">
    <property type="entry name" value="pyrD_sub2"/>
    <property type="match status" value="1"/>
</dbReference>
<dbReference type="PANTHER" id="PTHR48109:SF4">
    <property type="entry name" value="DIHYDROOROTATE DEHYDROGENASE (QUINONE), MITOCHONDRIAL"/>
    <property type="match status" value="1"/>
</dbReference>
<dbReference type="PANTHER" id="PTHR48109">
    <property type="entry name" value="DIHYDROOROTATE DEHYDROGENASE (QUINONE), MITOCHONDRIAL-RELATED"/>
    <property type="match status" value="1"/>
</dbReference>
<dbReference type="Pfam" id="PF01180">
    <property type="entry name" value="DHO_dh"/>
    <property type="match status" value="1"/>
</dbReference>
<dbReference type="PIRSF" id="PIRSF000164">
    <property type="entry name" value="DHO_oxidase"/>
    <property type="match status" value="1"/>
</dbReference>
<dbReference type="SUPFAM" id="SSF51395">
    <property type="entry name" value="FMN-linked oxidoreductases"/>
    <property type="match status" value="1"/>
</dbReference>
<dbReference type="PROSITE" id="PS00911">
    <property type="entry name" value="DHODEHASE_1"/>
    <property type="match status" value="1"/>
</dbReference>
<dbReference type="PROSITE" id="PS00912">
    <property type="entry name" value="DHODEHASE_2"/>
    <property type="match status" value="1"/>
</dbReference>
<name>PYRD_BURL3</name>